<organism>
    <name type="scientific">Shewanella baltica (strain OS195)</name>
    <dbReference type="NCBI Taxonomy" id="399599"/>
    <lineage>
        <taxon>Bacteria</taxon>
        <taxon>Pseudomonadati</taxon>
        <taxon>Pseudomonadota</taxon>
        <taxon>Gammaproteobacteria</taxon>
        <taxon>Alteromonadales</taxon>
        <taxon>Shewanellaceae</taxon>
        <taxon>Shewanella</taxon>
    </lineage>
</organism>
<gene>
    <name evidence="1" type="primary">plsB</name>
    <name type="ordered locus">Sbal195_4308</name>
</gene>
<feature type="chain" id="PRO_1000080291" description="Glycerol-3-phosphate acyltransferase">
    <location>
        <begin position="1"/>
        <end position="807"/>
    </location>
</feature>
<feature type="short sequence motif" description="HXXXXD motif">
    <location>
        <begin position="308"/>
        <end position="313"/>
    </location>
</feature>
<sequence>MPKHDSLWLKSLRWIQKHLVHTIVVPQDPFADLNLDASRPLAYVMKTESLSDIAALSEITAKLGLPSPYEPLVANGVIAPRVVCLQGRKPLFGERAGNEPFLECFMRLLAVHKERPELDIQLVPVSLYWGRTPGKEDDTMKAAVFERENPTWLRKCLMILFLGRHNFVQFSNAVSLRYMADEHGTDMGIAHKLARVARVHFRRQRKVMTGPVLPNRQALFHSLLKSESLRKAIQEEAANKKISETQARETAIEYLDEIAADYSDSLVRIAERFLTWLWNKLYSGINIKGAEQVRQLHHDGHEIVYVPCHRSHMDYLLLSYILYYQGMVPPHIAAGINLNFWPAGPMFRRGGAFFIRRSFNGNKLYTAVFREYLDQLFAKGYSVEYFSEGGRSRTGRLLAPKTGMIAMTMNSVLRGIERPVTLVPVYLGYDHVMEVATYHKELSGKKKKKESVWQVFGAIRKLGNFGQGYVNFGEPITLQNFLNERAPNWRTELADDPEQKPSWLTPAVNVLANRVMTNINDAAAASSVTLTSLVLLATDQNALERSLLERQLDLYLTLLKKVPYTTYTSVAEGDGKHLVQQGLELNKFVVCADPLGEIVSIEASQAVSMTYYRNNIIHLFIVPSLIASCLTHNEQIPRQQVVSIVADFYPLLKAELFMGIKDVPAYVNQVLDFFIEQGLVVETDTLTVVPEHTSQLLLLASSVSETLQRYAIIFNLLANRPKMERSELESESHLLAQRLGALHGITAPEFYDKKLYGTLSVKLKELGYLADNQDKSNINRIRDQANSLLRPSVKQTIVASVTAEHTV</sequence>
<name>PLSB_SHEB9</name>
<keyword id="KW-0012">Acyltransferase</keyword>
<keyword id="KW-0997">Cell inner membrane</keyword>
<keyword id="KW-1003">Cell membrane</keyword>
<keyword id="KW-0444">Lipid biosynthesis</keyword>
<keyword id="KW-0443">Lipid metabolism</keyword>
<keyword id="KW-0472">Membrane</keyword>
<keyword id="KW-0594">Phospholipid biosynthesis</keyword>
<keyword id="KW-1208">Phospholipid metabolism</keyword>
<keyword id="KW-0808">Transferase</keyword>
<comment type="catalytic activity">
    <reaction evidence="1">
        <text>sn-glycerol 3-phosphate + an acyl-CoA = a 1-acyl-sn-glycero-3-phosphate + CoA</text>
        <dbReference type="Rhea" id="RHEA:15325"/>
        <dbReference type="ChEBI" id="CHEBI:57287"/>
        <dbReference type="ChEBI" id="CHEBI:57597"/>
        <dbReference type="ChEBI" id="CHEBI:57970"/>
        <dbReference type="ChEBI" id="CHEBI:58342"/>
        <dbReference type="EC" id="2.3.1.15"/>
    </reaction>
</comment>
<comment type="pathway">
    <text evidence="1">Phospholipid metabolism; CDP-diacylglycerol biosynthesis; CDP-diacylglycerol from sn-glycerol 3-phosphate: step 1/3.</text>
</comment>
<comment type="subcellular location">
    <subcellularLocation>
        <location evidence="1">Cell inner membrane</location>
        <topology evidence="1">Peripheral membrane protein</topology>
        <orientation evidence="1">Cytoplasmic side</orientation>
    </subcellularLocation>
</comment>
<comment type="domain">
    <text evidence="1">The HXXXXD motif is essential for acyltransferase activity and may constitute the binding site for the phosphate moiety of the glycerol-3-phosphate.</text>
</comment>
<comment type="similarity">
    <text evidence="1">Belongs to the GPAT/DAPAT family.</text>
</comment>
<reference key="1">
    <citation type="submission" date="2007-11" db="EMBL/GenBank/DDBJ databases">
        <title>Complete sequence of chromosome of Shewanella baltica OS195.</title>
        <authorList>
            <consortium name="US DOE Joint Genome Institute"/>
            <person name="Copeland A."/>
            <person name="Lucas S."/>
            <person name="Lapidus A."/>
            <person name="Barry K."/>
            <person name="Glavina del Rio T."/>
            <person name="Dalin E."/>
            <person name="Tice H."/>
            <person name="Pitluck S."/>
            <person name="Chain P."/>
            <person name="Malfatti S."/>
            <person name="Shin M."/>
            <person name="Vergez L."/>
            <person name="Schmutz J."/>
            <person name="Larimer F."/>
            <person name="Land M."/>
            <person name="Hauser L."/>
            <person name="Kyrpides N."/>
            <person name="Kim E."/>
            <person name="Brettar I."/>
            <person name="Rodrigues J."/>
            <person name="Konstantinidis K."/>
            <person name="Klappenbach J."/>
            <person name="Hofle M."/>
            <person name="Tiedje J."/>
            <person name="Richardson P."/>
        </authorList>
    </citation>
    <scope>NUCLEOTIDE SEQUENCE [LARGE SCALE GENOMIC DNA]</scope>
    <source>
        <strain>OS195</strain>
    </source>
</reference>
<evidence type="ECO:0000255" key="1">
    <source>
        <dbReference type="HAMAP-Rule" id="MF_00393"/>
    </source>
</evidence>
<accession>A9KUW7</accession>
<proteinExistence type="inferred from homology"/>
<dbReference type="EC" id="2.3.1.15" evidence="1"/>
<dbReference type="EMBL" id="CP000891">
    <property type="protein sequence ID" value="ABX51466.1"/>
    <property type="molecule type" value="Genomic_DNA"/>
</dbReference>
<dbReference type="RefSeq" id="WP_006079610.1">
    <property type="nucleotide sequence ID" value="NC_009997.1"/>
</dbReference>
<dbReference type="SMR" id="A9KUW7"/>
<dbReference type="GeneID" id="11774285"/>
<dbReference type="KEGG" id="sbn:Sbal195_4308"/>
<dbReference type="HOGENOM" id="CLU_015407_0_0_6"/>
<dbReference type="UniPathway" id="UPA00557">
    <property type="reaction ID" value="UER00612"/>
</dbReference>
<dbReference type="Proteomes" id="UP000000770">
    <property type="component" value="Chromosome"/>
</dbReference>
<dbReference type="GO" id="GO:0005886">
    <property type="term" value="C:plasma membrane"/>
    <property type="evidence" value="ECO:0007669"/>
    <property type="project" value="UniProtKB-SubCell"/>
</dbReference>
<dbReference type="GO" id="GO:0004366">
    <property type="term" value="F:glycerol-3-phosphate O-acyltransferase activity"/>
    <property type="evidence" value="ECO:0007669"/>
    <property type="project" value="UniProtKB-UniRule"/>
</dbReference>
<dbReference type="GO" id="GO:0016024">
    <property type="term" value="P:CDP-diacylglycerol biosynthetic process"/>
    <property type="evidence" value="ECO:0007669"/>
    <property type="project" value="UniProtKB-UniRule"/>
</dbReference>
<dbReference type="GO" id="GO:0006631">
    <property type="term" value="P:fatty acid metabolic process"/>
    <property type="evidence" value="ECO:0007669"/>
    <property type="project" value="TreeGrafter"/>
</dbReference>
<dbReference type="CDD" id="cd07993">
    <property type="entry name" value="LPLAT_DHAPAT-like"/>
    <property type="match status" value="1"/>
</dbReference>
<dbReference type="HAMAP" id="MF_00393">
    <property type="entry name" value="Glyc3P_acyltrans"/>
    <property type="match status" value="1"/>
</dbReference>
<dbReference type="InterPro" id="IPR022284">
    <property type="entry name" value="GPAT/DHAPAT"/>
</dbReference>
<dbReference type="InterPro" id="IPR045520">
    <property type="entry name" value="GPAT/DHAPAT_C"/>
</dbReference>
<dbReference type="InterPro" id="IPR041728">
    <property type="entry name" value="GPAT/DHAPAT_LPLAT"/>
</dbReference>
<dbReference type="InterPro" id="IPR028354">
    <property type="entry name" value="GPAT_PlsB"/>
</dbReference>
<dbReference type="InterPro" id="IPR002123">
    <property type="entry name" value="Plipid/glycerol_acylTrfase"/>
</dbReference>
<dbReference type="NCBIfam" id="TIGR03703">
    <property type="entry name" value="plsB"/>
    <property type="match status" value="1"/>
</dbReference>
<dbReference type="NCBIfam" id="NF003441">
    <property type="entry name" value="PRK04974.1"/>
    <property type="match status" value="1"/>
</dbReference>
<dbReference type="PANTHER" id="PTHR12563:SF17">
    <property type="entry name" value="DIHYDROXYACETONE PHOSPHATE ACYLTRANSFERASE"/>
    <property type="match status" value="1"/>
</dbReference>
<dbReference type="PANTHER" id="PTHR12563">
    <property type="entry name" value="GLYCEROL-3-PHOSPHATE ACYLTRANSFERASE"/>
    <property type="match status" value="1"/>
</dbReference>
<dbReference type="Pfam" id="PF01553">
    <property type="entry name" value="Acyltransferase"/>
    <property type="match status" value="1"/>
</dbReference>
<dbReference type="Pfam" id="PF19277">
    <property type="entry name" value="GPAT_C"/>
    <property type="match status" value="1"/>
</dbReference>
<dbReference type="PIRSF" id="PIRSF500064">
    <property type="entry name" value="GPAT"/>
    <property type="match status" value="1"/>
</dbReference>
<dbReference type="PIRSF" id="PIRSF000437">
    <property type="entry name" value="GPAT_DHAPAT"/>
    <property type="match status" value="1"/>
</dbReference>
<dbReference type="SMART" id="SM00563">
    <property type="entry name" value="PlsC"/>
    <property type="match status" value="1"/>
</dbReference>
<dbReference type="SUPFAM" id="SSF69593">
    <property type="entry name" value="Glycerol-3-phosphate (1)-acyltransferase"/>
    <property type="match status" value="1"/>
</dbReference>
<protein>
    <recommendedName>
        <fullName evidence="1">Glycerol-3-phosphate acyltransferase</fullName>
        <shortName evidence="1">GPAT</shortName>
        <ecNumber evidence="1">2.3.1.15</ecNumber>
    </recommendedName>
</protein>